<gene>
    <name type="ordered locus">NWMN_0977</name>
</gene>
<reference key="1">
    <citation type="journal article" date="2008" name="J. Bacteriol.">
        <title>Genome sequence of Staphylococcus aureus strain Newman and comparative analysis of staphylococcal genomes: polymorphism and evolution of two major pathogenicity islands.</title>
        <authorList>
            <person name="Baba T."/>
            <person name="Bae T."/>
            <person name="Schneewind O."/>
            <person name="Takeuchi F."/>
            <person name="Hiramatsu K."/>
        </authorList>
    </citation>
    <scope>NUCLEOTIDE SEQUENCE [LARGE SCALE GENOMIC DNA]</scope>
    <source>
        <strain>Newman</strain>
    </source>
</reference>
<feature type="chain" id="PRO_1000073583" description="UPF0358 protein NWMN_0977">
    <location>
        <begin position="1"/>
        <end position="91"/>
    </location>
</feature>
<organism>
    <name type="scientific">Staphylococcus aureus (strain Newman)</name>
    <dbReference type="NCBI Taxonomy" id="426430"/>
    <lineage>
        <taxon>Bacteria</taxon>
        <taxon>Bacillati</taxon>
        <taxon>Bacillota</taxon>
        <taxon>Bacilli</taxon>
        <taxon>Bacillales</taxon>
        <taxon>Staphylococcaceae</taxon>
        <taxon>Staphylococcus</taxon>
    </lineage>
</organism>
<evidence type="ECO:0000255" key="1">
    <source>
        <dbReference type="HAMAP-Rule" id="MF_01560"/>
    </source>
</evidence>
<sequence>MAKQATMKNAALKQLTKDADEILHLIKVQLDNLTLPSCPLYEEVLDTQMFGLQKEVDFAVKLGLVDREDGKQIMLRLEKELSKLHEAFTLV</sequence>
<protein>
    <recommendedName>
        <fullName evidence="1">UPF0358 protein NWMN_0977</fullName>
    </recommendedName>
</protein>
<comment type="similarity">
    <text evidence="1">Belongs to the UPF0358 family.</text>
</comment>
<accession>A6QFW7</accession>
<name>Y977_STAAE</name>
<proteinExistence type="inferred from homology"/>
<dbReference type="EMBL" id="AP009351">
    <property type="protein sequence ID" value="BAF67249.1"/>
    <property type="molecule type" value="Genomic_DNA"/>
</dbReference>
<dbReference type="RefSeq" id="WP_001118417.1">
    <property type="nucleotide sequence ID" value="NZ_JBBIAE010000002.1"/>
</dbReference>
<dbReference type="SMR" id="A6QFW7"/>
<dbReference type="KEGG" id="sae:NWMN_0977"/>
<dbReference type="HOGENOM" id="CLU_160493_1_0_9"/>
<dbReference type="Proteomes" id="UP000006386">
    <property type="component" value="Chromosome"/>
</dbReference>
<dbReference type="Gene3D" id="1.10.287.750">
    <property type="entry name" value="SO2669-like"/>
    <property type="match status" value="1"/>
</dbReference>
<dbReference type="HAMAP" id="MF_01560">
    <property type="entry name" value="UPF0358"/>
    <property type="match status" value="1"/>
</dbReference>
<dbReference type="InterPro" id="IPR009983">
    <property type="entry name" value="UPF0358"/>
</dbReference>
<dbReference type="InterPro" id="IPR036270">
    <property type="entry name" value="UPF0358_sf"/>
</dbReference>
<dbReference type="NCBIfam" id="NF010187">
    <property type="entry name" value="PRK13666.1"/>
    <property type="match status" value="1"/>
</dbReference>
<dbReference type="Pfam" id="PF07408">
    <property type="entry name" value="DUF1507"/>
    <property type="match status" value="1"/>
</dbReference>
<dbReference type="SUPFAM" id="SSF140404">
    <property type="entry name" value="EF2458-like"/>
    <property type="match status" value="1"/>
</dbReference>